<proteinExistence type="inferred from homology"/>
<sequence>MLQITLPTHVHARLADYARLLRIDRPIGTLLLLWPTYWALWLAAEGGPSFANLVIFTLGVFFMRAAGCAINDFADRDWDRHVKRTKDRPLTAGRVRAWEAVALFAGLCLVSFLMVVLFTNTLTLYLSFGGALLAFIYPFMKRYTHLPQLFLGAAFSWAIPMAWAAEANQLSQLTWLLFTANVLWTVAYDTLYAMVDRDDDLKVGIKSTAILFGDADRAIIALLQTMVVVILVMVGQRAELGSFYYLGVVAMATLFVYHQYLARERNREGCFKAFLNNNWAGFAVFLGLALDLAF</sequence>
<accession>A1U6P5</accession>
<keyword id="KW-0997">Cell inner membrane</keyword>
<keyword id="KW-1003">Cell membrane</keyword>
<keyword id="KW-0460">Magnesium</keyword>
<keyword id="KW-0472">Membrane</keyword>
<keyword id="KW-0808">Transferase</keyword>
<keyword id="KW-0812">Transmembrane</keyword>
<keyword id="KW-1133">Transmembrane helix</keyword>
<keyword id="KW-0831">Ubiquinone biosynthesis</keyword>
<gene>
    <name evidence="1" type="primary">ubiA</name>
    <name type="ordered locus">Maqu_3595</name>
</gene>
<comment type="function">
    <text evidence="1">Catalyzes the prenylation of para-hydroxybenzoate (PHB) with an all-trans polyprenyl group. Mediates the second step in the final reaction sequence of ubiquinone-8 (UQ-8) biosynthesis, which is the condensation of the polyisoprenoid side chain with PHB, generating the first membrane-bound Q intermediate 3-octaprenyl-4-hydroxybenzoate.</text>
</comment>
<comment type="catalytic activity">
    <reaction evidence="1">
        <text>all-trans-octaprenyl diphosphate + 4-hydroxybenzoate = 4-hydroxy-3-(all-trans-octaprenyl)benzoate + diphosphate</text>
        <dbReference type="Rhea" id="RHEA:27782"/>
        <dbReference type="ChEBI" id="CHEBI:1617"/>
        <dbReference type="ChEBI" id="CHEBI:17879"/>
        <dbReference type="ChEBI" id="CHEBI:33019"/>
        <dbReference type="ChEBI" id="CHEBI:57711"/>
        <dbReference type="EC" id="2.5.1.39"/>
    </reaction>
</comment>
<comment type="cofactor">
    <cofactor evidence="1">
        <name>Mg(2+)</name>
        <dbReference type="ChEBI" id="CHEBI:18420"/>
    </cofactor>
</comment>
<comment type="pathway">
    <text evidence="1">Cofactor biosynthesis; ubiquinone biosynthesis.</text>
</comment>
<comment type="subcellular location">
    <subcellularLocation>
        <location evidence="1">Cell inner membrane</location>
        <topology evidence="1">Multi-pass membrane protein</topology>
    </subcellularLocation>
</comment>
<comment type="similarity">
    <text evidence="1">Belongs to the UbiA prenyltransferase family.</text>
</comment>
<protein>
    <recommendedName>
        <fullName evidence="1">4-hydroxybenzoate octaprenyltransferase</fullName>
        <ecNumber evidence="1">2.5.1.39</ecNumber>
    </recommendedName>
    <alternativeName>
        <fullName evidence="1">4-HB polyprenyltransferase</fullName>
    </alternativeName>
</protein>
<feature type="chain" id="PRO_0000336978" description="4-hydroxybenzoate octaprenyltransferase">
    <location>
        <begin position="1"/>
        <end position="294"/>
    </location>
</feature>
<feature type="transmembrane region" description="Helical" evidence="1">
    <location>
        <begin position="20"/>
        <end position="42"/>
    </location>
</feature>
<feature type="transmembrane region" description="Helical" evidence="1">
    <location>
        <begin position="98"/>
        <end position="118"/>
    </location>
</feature>
<feature type="transmembrane region" description="Helical" evidence="1">
    <location>
        <begin position="120"/>
        <end position="140"/>
    </location>
</feature>
<feature type="transmembrane region" description="Helical" evidence="1">
    <location>
        <begin position="145"/>
        <end position="165"/>
    </location>
</feature>
<feature type="transmembrane region" description="Helical" evidence="1">
    <location>
        <begin position="175"/>
        <end position="195"/>
    </location>
</feature>
<feature type="transmembrane region" description="Helical" evidence="1">
    <location>
        <begin position="218"/>
        <end position="238"/>
    </location>
</feature>
<feature type="transmembrane region" description="Helical" evidence="1">
    <location>
        <begin position="242"/>
        <end position="262"/>
    </location>
</feature>
<feature type="transmembrane region" description="Helical" evidence="1">
    <location>
        <begin position="274"/>
        <end position="294"/>
    </location>
</feature>
<name>UBIA_MARN8</name>
<organism>
    <name type="scientific">Marinobacter nauticus (strain ATCC 700491 / DSM 11845 / VT8)</name>
    <name type="common">Marinobacter aquaeolei</name>
    <dbReference type="NCBI Taxonomy" id="351348"/>
    <lineage>
        <taxon>Bacteria</taxon>
        <taxon>Pseudomonadati</taxon>
        <taxon>Pseudomonadota</taxon>
        <taxon>Gammaproteobacteria</taxon>
        <taxon>Pseudomonadales</taxon>
        <taxon>Marinobacteraceae</taxon>
        <taxon>Marinobacter</taxon>
    </lineage>
</organism>
<dbReference type="EC" id="2.5.1.39" evidence="1"/>
<dbReference type="EMBL" id="CP000514">
    <property type="protein sequence ID" value="ABM20664.1"/>
    <property type="molecule type" value="Genomic_DNA"/>
</dbReference>
<dbReference type="RefSeq" id="WP_011787003.1">
    <property type="nucleotide sequence ID" value="NC_008740.1"/>
</dbReference>
<dbReference type="SMR" id="A1U6P5"/>
<dbReference type="STRING" id="351348.Maqu_3595"/>
<dbReference type="KEGG" id="maq:Maqu_3595"/>
<dbReference type="eggNOG" id="COG0382">
    <property type="taxonomic scope" value="Bacteria"/>
</dbReference>
<dbReference type="HOGENOM" id="CLU_034879_1_0_6"/>
<dbReference type="OrthoDB" id="9782418at2"/>
<dbReference type="UniPathway" id="UPA00232"/>
<dbReference type="Proteomes" id="UP000000998">
    <property type="component" value="Chromosome"/>
</dbReference>
<dbReference type="GO" id="GO:0005886">
    <property type="term" value="C:plasma membrane"/>
    <property type="evidence" value="ECO:0007669"/>
    <property type="project" value="UniProtKB-SubCell"/>
</dbReference>
<dbReference type="GO" id="GO:0008412">
    <property type="term" value="F:4-hydroxybenzoate polyprenyltransferase activity"/>
    <property type="evidence" value="ECO:0007669"/>
    <property type="project" value="UniProtKB-UniRule"/>
</dbReference>
<dbReference type="GO" id="GO:0006744">
    <property type="term" value="P:ubiquinone biosynthetic process"/>
    <property type="evidence" value="ECO:0007669"/>
    <property type="project" value="UniProtKB-UniRule"/>
</dbReference>
<dbReference type="CDD" id="cd13959">
    <property type="entry name" value="PT_UbiA_COQ2"/>
    <property type="match status" value="1"/>
</dbReference>
<dbReference type="FunFam" id="1.10.357.140:FF:000002">
    <property type="entry name" value="4-hydroxybenzoate octaprenyltransferase"/>
    <property type="match status" value="1"/>
</dbReference>
<dbReference type="FunFam" id="1.20.120.1780:FF:000001">
    <property type="entry name" value="4-hydroxybenzoate octaprenyltransferase"/>
    <property type="match status" value="1"/>
</dbReference>
<dbReference type="Gene3D" id="1.10.357.140">
    <property type="entry name" value="UbiA prenyltransferase"/>
    <property type="match status" value="1"/>
</dbReference>
<dbReference type="Gene3D" id="1.20.120.1780">
    <property type="entry name" value="UbiA prenyltransferase"/>
    <property type="match status" value="1"/>
</dbReference>
<dbReference type="HAMAP" id="MF_01635">
    <property type="entry name" value="UbiA"/>
    <property type="match status" value="1"/>
</dbReference>
<dbReference type="InterPro" id="IPR006370">
    <property type="entry name" value="HB_polyprenyltransferase-like"/>
</dbReference>
<dbReference type="InterPro" id="IPR039653">
    <property type="entry name" value="Prenyltransferase"/>
</dbReference>
<dbReference type="InterPro" id="IPR000537">
    <property type="entry name" value="UbiA_prenyltransferase"/>
</dbReference>
<dbReference type="InterPro" id="IPR044878">
    <property type="entry name" value="UbiA_sf"/>
</dbReference>
<dbReference type="NCBIfam" id="TIGR01474">
    <property type="entry name" value="ubiA_proteo"/>
    <property type="match status" value="1"/>
</dbReference>
<dbReference type="PANTHER" id="PTHR11048:SF28">
    <property type="entry name" value="4-HYDROXYBENZOATE POLYPRENYLTRANSFERASE, MITOCHONDRIAL"/>
    <property type="match status" value="1"/>
</dbReference>
<dbReference type="PANTHER" id="PTHR11048">
    <property type="entry name" value="PRENYLTRANSFERASES"/>
    <property type="match status" value="1"/>
</dbReference>
<dbReference type="Pfam" id="PF01040">
    <property type="entry name" value="UbiA"/>
    <property type="match status" value="1"/>
</dbReference>
<reference key="1">
    <citation type="journal article" date="2011" name="Appl. Environ. Microbiol.">
        <title>Genomic potential of Marinobacter aquaeolei, a biogeochemical 'opportunitroph'.</title>
        <authorList>
            <person name="Singer E."/>
            <person name="Webb E.A."/>
            <person name="Nelson W.C."/>
            <person name="Heidelberg J.F."/>
            <person name="Ivanova N."/>
            <person name="Pati A."/>
            <person name="Edwards K.J."/>
        </authorList>
    </citation>
    <scope>NUCLEOTIDE SEQUENCE [LARGE SCALE GENOMIC DNA]</scope>
    <source>
        <strain>ATCC 700491 / DSM 11845 / VT8</strain>
    </source>
</reference>
<evidence type="ECO:0000255" key="1">
    <source>
        <dbReference type="HAMAP-Rule" id="MF_01635"/>
    </source>
</evidence>